<sequence>MPHTVATPPPLLQVRGISKQFSGVVVLKSIDFTLQPGQVHALLGGNGAGKSTLMKIIAGILPPDTGVIEMNGQPCFNLTPAKAHQLGIYLVPQEPMLFANLSVQENILFRLPKHQADKKKMAQLLKNLGCHLDLSVSAGSLEVADQQLVEIMRGLIRDSHILILDEPTASLTPAETHRLFSQIRMLLQQGVGVVFISHKLPEIRQLADWVSVMRDGGIALSGATADFSTEDMIQAMTPEAQKGALTDSQKLWLELPGNRRAQSHAQSQQPVIHVHDLSGEGFAHISFHVQAGEILGLAGVVGAGRTELAETLYGLRPASTGNVILEEVNITAMKTANRLAAGLVYLPEDRQASGLYLDAPLSWNVCALAHDRQGLWTQPAQEAAVLERYRRALNIKFSHLEQPVRTLSGGNQQKLLIAKCLEANPLLLIIDEPTRGVDVSARSDIYQLIRSIAEQQVAIIFISSDLEEVVQMADRVLVMHQGEINGALSGAAMNVDTIMHMAFGEHRSASEPQGGTASSAENKGASC</sequence>
<organism>
    <name type="scientific">Yersinia pestis (strain Pestoides F)</name>
    <dbReference type="NCBI Taxonomy" id="386656"/>
    <lineage>
        <taxon>Bacteria</taxon>
        <taxon>Pseudomonadati</taxon>
        <taxon>Pseudomonadota</taxon>
        <taxon>Gammaproteobacteria</taxon>
        <taxon>Enterobacterales</taxon>
        <taxon>Yersiniaceae</taxon>
        <taxon>Yersinia</taxon>
    </lineage>
</organism>
<reference key="1">
    <citation type="submission" date="2007-02" db="EMBL/GenBank/DDBJ databases">
        <title>Complete sequence of chromosome of Yersinia pestis Pestoides F.</title>
        <authorList>
            <consortium name="US DOE Joint Genome Institute"/>
            <person name="Copeland A."/>
            <person name="Lucas S."/>
            <person name="Lapidus A."/>
            <person name="Barry K."/>
            <person name="Detter J.C."/>
            <person name="Glavina del Rio T."/>
            <person name="Hammon N."/>
            <person name="Israni S."/>
            <person name="Dalin E."/>
            <person name="Tice H."/>
            <person name="Pitluck S."/>
            <person name="Di Bartolo G."/>
            <person name="Chain P."/>
            <person name="Malfatti S."/>
            <person name="Shin M."/>
            <person name="Vergez L."/>
            <person name="Schmutz J."/>
            <person name="Larimer F."/>
            <person name="Land M."/>
            <person name="Hauser L."/>
            <person name="Worsham P."/>
            <person name="Chu M."/>
            <person name="Bearden S."/>
            <person name="Garcia E."/>
            <person name="Richardson P."/>
        </authorList>
    </citation>
    <scope>NUCLEOTIDE SEQUENCE [LARGE SCALE GENOMIC DNA]</scope>
    <source>
        <strain>Pestoides F</strain>
    </source>
</reference>
<name>LSRA_YERPP</name>
<accession>A4TQL5</accession>
<comment type="function">
    <text evidence="1">Part of the ABC transporter complex LsrABCD involved in autoinducer 2 (AI-2) import. Responsible for energy coupling to the transport system.</text>
</comment>
<comment type="catalytic activity">
    <reaction evidence="1">
        <text>ATP + H2O + (2R,4S)-2-methyl-2,3,3,4-tetrahydroxytetrahydrofuran-[AI-2-binding protein]Side 1 = ADP + phosphate + (2R,4S)-2-methyl-2,3,3,4-tetrahydroxytetrahydrofuranSide 2 + [AI-2-binding protein]Side 1.</text>
        <dbReference type="EC" id="7.6.2.13"/>
    </reaction>
</comment>
<comment type="subunit">
    <text evidence="1">The complex is composed of two ATP-binding proteins (LsrA), two transmembrane proteins (LsrC and LsrD) and a solute-binding protein (LsrB).</text>
</comment>
<comment type="subcellular location">
    <subcellularLocation>
        <location evidence="1">Cell inner membrane</location>
        <topology evidence="1">Peripheral membrane protein</topology>
    </subcellularLocation>
</comment>
<comment type="similarity">
    <text evidence="4">Belongs to the ABC transporter superfamily. AI-2 autoinducer porter (TC 3.A.1.2.8) family.</text>
</comment>
<protein>
    <recommendedName>
        <fullName evidence="1">Autoinducer 2 import ATP-binding protein LsrA</fullName>
        <shortName evidence="1">AI-2 import ATP-binding protein LsrA</shortName>
        <ecNumber evidence="1">7.6.2.13</ecNumber>
    </recommendedName>
</protein>
<evidence type="ECO:0000250" key="1">
    <source>
        <dbReference type="UniProtKB" id="P77257"/>
    </source>
</evidence>
<evidence type="ECO:0000255" key="2">
    <source>
        <dbReference type="PROSITE-ProRule" id="PRU00434"/>
    </source>
</evidence>
<evidence type="ECO:0000256" key="3">
    <source>
        <dbReference type="SAM" id="MobiDB-lite"/>
    </source>
</evidence>
<evidence type="ECO:0000305" key="4"/>
<dbReference type="EC" id="7.6.2.13" evidence="1"/>
<dbReference type="EMBL" id="CP000668">
    <property type="protein sequence ID" value="ABP41577.1"/>
    <property type="molecule type" value="Genomic_DNA"/>
</dbReference>
<dbReference type="PIR" id="AC0051">
    <property type="entry name" value="AC0051"/>
</dbReference>
<dbReference type="RefSeq" id="WP_002209192.1">
    <property type="nucleotide sequence ID" value="NZ_CP009715.1"/>
</dbReference>
<dbReference type="SMR" id="A4TQL5"/>
<dbReference type="GeneID" id="57974198"/>
<dbReference type="KEGG" id="ypp:YPDSF_3219"/>
<dbReference type="PATRIC" id="fig|386656.14.peg.1125"/>
<dbReference type="GO" id="GO:0005886">
    <property type="term" value="C:plasma membrane"/>
    <property type="evidence" value="ECO:0007669"/>
    <property type="project" value="UniProtKB-SubCell"/>
</dbReference>
<dbReference type="GO" id="GO:0005524">
    <property type="term" value="F:ATP binding"/>
    <property type="evidence" value="ECO:0007669"/>
    <property type="project" value="UniProtKB-KW"/>
</dbReference>
<dbReference type="GO" id="GO:0016887">
    <property type="term" value="F:ATP hydrolysis activity"/>
    <property type="evidence" value="ECO:0007669"/>
    <property type="project" value="InterPro"/>
</dbReference>
<dbReference type="CDD" id="cd03216">
    <property type="entry name" value="ABC_Carb_Monos_I"/>
    <property type="match status" value="1"/>
</dbReference>
<dbReference type="CDD" id="cd03215">
    <property type="entry name" value="ABC_Carb_Monos_II"/>
    <property type="match status" value="1"/>
</dbReference>
<dbReference type="Gene3D" id="3.40.50.300">
    <property type="entry name" value="P-loop containing nucleotide triphosphate hydrolases"/>
    <property type="match status" value="2"/>
</dbReference>
<dbReference type="InterPro" id="IPR003593">
    <property type="entry name" value="AAA+_ATPase"/>
</dbReference>
<dbReference type="InterPro" id="IPR050107">
    <property type="entry name" value="ABC_carbohydrate_import_ATPase"/>
</dbReference>
<dbReference type="InterPro" id="IPR003439">
    <property type="entry name" value="ABC_transporter-like_ATP-bd"/>
</dbReference>
<dbReference type="InterPro" id="IPR017871">
    <property type="entry name" value="ABC_transporter-like_CS"/>
</dbReference>
<dbReference type="InterPro" id="IPR027417">
    <property type="entry name" value="P-loop_NTPase"/>
</dbReference>
<dbReference type="NCBIfam" id="NF011967">
    <property type="entry name" value="PRK15439.1"/>
    <property type="match status" value="1"/>
</dbReference>
<dbReference type="PANTHER" id="PTHR43790:SF2">
    <property type="entry name" value="AUTOINDUCER 2 IMPORT ATP-BINDING PROTEIN LSRA"/>
    <property type="match status" value="1"/>
</dbReference>
<dbReference type="PANTHER" id="PTHR43790">
    <property type="entry name" value="CARBOHYDRATE TRANSPORT ATP-BINDING PROTEIN MG119-RELATED"/>
    <property type="match status" value="1"/>
</dbReference>
<dbReference type="Pfam" id="PF00005">
    <property type="entry name" value="ABC_tran"/>
    <property type="match status" value="2"/>
</dbReference>
<dbReference type="SMART" id="SM00382">
    <property type="entry name" value="AAA"/>
    <property type="match status" value="2"/>
</dbReference>
<dbReference type="SUPFAM" id="SSF52540">
    <property type="entry name" value="P-loop containing nucleoside triphosphate hydrolases"/>
    <property type="match status" value="2"/>
</dbReference>
<dbReference type="PROSITE" id="PS00211">
    <property type="entry name" value="ABC_TRANSPORTER_1"/>
    <property type="match status" value="1"/>
</dbReference>
<dbReference type="PROSITE" id="PS50893">
    <property type="entry name" value="ABC_TRANSPORTER_2"/>
    <property type="match status" value="2"/>
</dbReference>
<proteinExistence type="inferred from homology"/>
<keyword id="KW-0067">ATP-binding</keyword>
<keyword id="KW-0997">Cell inner membrane</keyword>
<keyword id="KW-1003">Cell membrane</keyword>
<keyword id="KW-0472">Membrane</keyword>
<keyword id="KW-0547">Nucleotide-binding</keyword>
<keyword id="KW-0677">Repeat</keyword>
<keyword id="KW-1278">Translocase</keyword>
<keyword id="KW-0813">Transport</keyword>
<gene>
    <name type="primary">lsrA</name>
    <name type="ordered locus">YPDSF_3219</name>
</gene>
<feature type="chain" id="PRO_0000351309" description="Autoinducer 2 import ATP-binding protein LsrA">
    <location>
        <begin position="1"/>
        <end position="527"/>
    </location>
</feature>
<feature type="domain" description="ABC transporter 1" evidence="2">
    <location>
        <begin position="12"/>
        <end position="240"/>
    </location>
</feature>
<feature type="domain" description="ABC transporter 2" evidence="2">
    <location>
        <begin position="266"/>
        <end position="506"/>
    </location>
</feature>
<feature type="region of interest" description="Disordered" evidence="3">
    <location>
        <begin position="507"/>
        <end position="527"/>
    </location>
</feature>
<feature type="compositionally biased region" description="Polar residues" evidence="3">
    <location>
        <begin position="510"/>
        <end position="521"/>
    </location>
</feature>
<feature type="binding site" evidence="2">
    <location>
        <begin position="44"/>
        <end position="51"/>
    </location>
    <ligand>
        <name>ATP</name>
        <dbReference type="ChEBI" id="CHEBI:30616"/>
    </ligand>
</feature>